<feature type="chain" id="PRO_0000165623" description="Holliday junction branch migration complex subunit RuvB">
    <location>
        <begin position="1"/>
        <end position="350"/>
    </location>
</feature>
<feature type="region of interest" description="Large ATPase domain (RuvB-L)" evidence="1">
    <location>
        <begin position="1"/>
        <end position="185"/>
    </location>
</feature>
<feature type="region of interest" description="Disordered" evidence="2">
    <location>
        <begin position="1"/>
        <end position="22"/>
    </location>
</feature>
<feature type="region of interest" description="Small ATPAse domain (RuvB-S)" evidence="1">
    <location>
        <begin position="186"/>
        <end position="256"/>
    </location>
</feature>
<feature type="region of interest" description="Head domain (RuvB-H)" evidence="1">
    <location>
        <begin position="259"/>
        <end position="350"/>
    </location>
</feature>
<feature type="binding site" evidence="1">
    <location>
        <position position="24"/>
    </location>
    <ligand>
        <name>ATP</name>
        <dbReference type="ChEBI" id="CHEBI:30616"/>
    </ligand>
</feature>
<feature type="binding site" evidence="1">
    <location>
        <position position="25"/>
    </location>
    <ligand>
        <name>ATP</name>
        <dbReference type="ChEBI" id="CHEBI:30616"/>
    </ligand>
</feature>
<feature type="binding site" evidence="1">
    <location>
        <position position="66"/>
    </location>
    <ligand>
        <name>ATP</name>
        <dbReference type="ChEBI" id="CHEBI:30616"/>
    </ligand>
</feature>
<feature type="binding site" evidence="1">
    <location>
        <position position="69"/>
    </location>
    <ligand>
        <name>ATP</name>
        <dbReference type="ChEBI" id="CHEBI:30616"/>
    </ligand>
</feature>
<feature type="binding site" evidence="1">
    <location>
        <position position="70"/>
    </location>
    <ligand>
        <name>ATP</name>
        <dbReference type="ChEBI" id="CHEBI:30616"/>
    </ligand>
</feature>
<feature type="binding site" evidence="1">
    <location>
        <position position="70"/>
    </location>
    <ligand>
        <name>Mg(2+)</name>
        <dbReference type="ChEBI" id="CHEBI:18420"/>
    </ligand>
</feature>
<feature type="binding site" evidence="1">
    <location>
        <position position="71"/>
    </location>
    <ligand>
        <name>ATP</name>
        <dbReference type="ChEBI" id="CHEBI:30616"/>
    </ligand>
</feature>
<feature type="binding site" evidence="1">
    <location>
        <begin position="132"/>
        <end position="134"/>
    </location>
    <ligand>
        <name>ATP</name>
        <dbReference type="ChEBI" id="CHEBI:30616"/>
    </ligand>
</feature>
<feature type="binding site" evidence="1">
    <location>
        <position position="175"/>
    </location>
    <ligand>
        <name>ATP</name>
        <dbReference type="ChEBI" id="CHEBI:30616"/>
    </ligand>
</feature>
<feature type="binding site" evidence="1">
    <location>
        <position position="185"/>
    </location>
    <ligand>
        <name>ATP</name>
        <dbReference type="ChEBI" id="CHEBI:30616"/>
    </ligand>
</feature>
<feature type="binding site" evidence="1">
    <location>
        <position position="222"/>
    </location>
    <ligand>
        <name>ATP</name>
        <dbReference type="ChEBI" id="CHEBI:30616"/>
    </ligand>
</feature>
<feature type="binding site" evidence="1">
    <location>
        <position position="314"/>
    </location>
    <ligand>
        <name>DNA</name>
        <dbReference type="ChEBI" id="CHEBI:16991"/>
    </ligand>
</feature>
<feature type="binding site" evidence="1">
    <location>
        <position position="319"/>
    </location>
    <ligand>
        <name>DNA</name>
        <dbReference type="ChEBI" id="CHEBI:16991"/>
    </ligand>
</feature>
<feature type="sequence conflict" description="In Ref. 2; AAC45724." evidence="3" ref="2">
    <original>L</original>
    <variation>V</variation>
    <location>
        <position position="67"/>
    </location>
</feature>
<proteinExistence type="inferred from homology"/>
<protein>
    <recommendedName>
        <fullName evidence="1">Holliday junction branch migration complex subunit RuvB</fullName>
        <ecNumber evidence="1">3.6.4.-</ecNumber>
    </recommendedName>
</protein>
<accession>P96115</accession>
<accession>O83197</accession>
<dbReference type="EC" id="3.6.4.-" evidence="1"/>
<dbReference type="EMBL" id="AE000520">
    <property type="protein sequence ID" value="AAC65150.1"/>
    <property type="molecule type" value="Genomic_DNA"/>
</dbReference>
<dbReference type="EMBL" id="U55214">
    <property type="protein sequence ID" value="AAC45724.1"/>
    <property type="molecule type" value="Genomic_DNA"/>
</dbReference>
<dbReference type="PIR" id="H71359">
    <property type="entry name" value="H71359"/>
</dbReference>
<dbReference type="RefSeq" id="WP_010881609.1">
    <property type="nucleotide sequence ID" value="NC_021490.2"/>
</dbReference>
<dbReference type="SMR" id="P96115"/>
<dbReference type="IntAct" id="P96115">
    <property type="interactions" value="5"/>
</dbReference>
<dbReference type="STRING" id="243276.TP_0162"/>
<dbReference type="EnsemblBacteria" id="AAC65150">
    <property type="protein sequence ID" value="AAC65150"/>
    <property type="gene ID" value="TP_0162"/>
</dbReference>
<dbReference type="GeneID" id="93875954"/>
<dbReference type="KEGG" id="tpa:TP_0162"/>
<dbReference type="KEGG" id="tpw:TPANIC_0162"/>
<dbReference type="eggNOG" id="COG2255">
    <property type="taxonomic scope" value="Bacteria"/>
</dbReference>
<dbReference type="HOGENOM" id="CLU_055599_1_0_12"/>
<dbReference type="OrthoDB" id="9804478at2"/>
<dbReference type="Proteomes" id="UP000000811">
    <property type="component" value="Chromosome"/>
</dbReference>
<dbReference type="GO" id="GO:0005737">
    <property type="term" value="C:cytoplasm"/>
    <property type="evidence" value="ECO:0007669"/>
    <property type="project" value="UniProtKB-SubCell"/>
</dbReference>
<dbReference type="GO" id="GO:0048476">
    <property type="term" value="C:Holliday junction resolvase complex"/>
    <property type="evidence" value="ECO:0007669"/>
    <property type="project" value="UniProtKB-UniRule"/>
</dbReference>
<dbReference type="GO" id="GO:0005524">
    <property type="term" value="F:ATP binding"/>
    <property type="evidence" value="ECO:0007669"/>
    <property type="project" value="UniProtKB-UniRule"/>
</dbReference>
<dbReference type="GO" id="GO:0016887">
    <property type="term" value="F:ATP hydrolysis activity"/>
    <property type="evidence" value="ECO:0007669"/>
    <property type="project" value="InterPro"/>
</dbReference>
<dbReference type="GO" id="GO:0000400">
    <property type="term" value="F:four-way junction DNA binding"/>
    <property type="evidence" value="ECO:0007669"/>
    <property type="project" value="UniProtKB-UniRule"/>
</dbReference>
<dbReference type="GO" id="GO:0009378">
    <property type="term" value="F:four-way junction helicase activity"/>
    <property type="evidence" value="ECO:0007669"/>
    <property type="project" value="InterPro"/>
</dbReference>
<dbReference type="GO" id="GO:0006310">
    <property type="term" value="P:DNA recombination"/>
    <property type="evidence" value="ECO:0007669"/>
    <property type="project" value="UniProtKB-UniRule"/>
</dbReference>
<dbReference type="GO" id="GO:0006281">
    <property type="term" value="P:DNA repair"/>
    <property type="evidence" value="ECO:0007669"/>
    <property type="project" value="UniProtKB-UniRule"/>
</dbReference>
<dbReference type="CDD" id="cd00009">
    <property type="entry name" value="AAA"/>
    <property type="match status" value="1"/>
</dbReference>
<dbReference type="Gene3D" id="1.10.8.60">
    <property type="match status" value="1"/>
</dbReference>
<dbReference type="Gene3D" id="3.40.50.300">
    <property type="entry name" value="P-loop containing nucleotide triphosphate hydrolases"/>
    <property type="match status" value="1"/>
</dbReference>
<dbReference type="Gene3D" id="1.10.10.10">
    <property type="entry name" value="Winged helix-like DNA-binding domain superfamily/Winged helix DNA-binding domain"/>
    <property type="match status" value="1"/>
</dbReference>
<dbReference type="HAMAP" id="MF_00016">
    <property type="entry name" value="DNA_HJ_migration_RuvB"/>
    <property type="match status" value="1"/>
</dbReference>
<dbReference type="InterPro" id="IPR003593">
    <property type="entry name" value="AAA+_ATPase"/>
</dbReference>
<dbReference type="InterPro" id="IPR041445">
    <property type="entry name" value="AAA_lid_4"/>
</dbReference>
<dbReference type="InterPro" id="IPR004605">
    <property type="entry name" value="DNA_helicase_Holl-junc_RuvB"/>
</dbReference>
<dbReference type="InterPro" id="IPR027417">
    <property type="entry name" value="P-loop_NTPase"/>
</dbReference>
<dbReference type="InterPro" id="IPR008824">
    <property type="entry name" value="RuvB-like_N"/>
</dbReference>
<dbReference type="InterPro" id="IPR008823">
    <property type="entry name" value="RuvB_C"/>
</dbReference>
<dbReference type="InterPro" id="IPR036388">
    <property type="entry name" value="WH-like_DNA-bd_sf"/>
</dbReference>
<dbReference type="InterPro" id="IPR036390">
    <property type="entry name" value="WH_DNA-bd_sf"/>
</dbReference>
<dbReference type="NCBIfam" id="NF000868">
    <property type="entry name" value="PRK00080.1"/>
    <property type="match status" value="1"/>
</dbReference>
<dbReference type="NCBIfam" id="TIGR00635">
    <property type="entry name" value="ruvB"/>
    <property type="match status" value="1"/>
</dbReference>
<dbReference type="PANTHER" id="PTHR42848">
    <property type="match status" value="1"/>
</dbReference>
<dbReference type="PANTHER" id="PTHR42848:SF1">
    <property type="entry name" value="HOLLIDAY JUNCTION BRANCH MIGRATION COMPLEX SUBUNIT RUVB"/>
    <property type="match status" value="1"/>
</dbReference>
<dbReference type="Pfam" id="PF17864">
    <property type="entry name" value="AAA_lid_4"/>
    <property type="match status" value="1"/>
</dbReference>
<dbReference type="Pfam" id="PF05491">
    <property type="entry name" value="RuvB_C"/>
    <property type="match status" value="1"/>
</dbReference>
<dbReference type="Pfam" id="PF05496">
    <property type="entry name" value="RuvB_N"/>
    <property type="match status" value="1"/>
</dbReference>
<dbReference type="SMART" id="SM00382">
    <property type="entry name" value="AAA"/>
    <property type="match status" value="1"/>
</dbReference>
<dbReference type="SUPFAM" id="SSF52540">
    <property type="entry name" value="P-loop containing nucleoside triphosphate hydrolases"/>
    <property type="match status" value="1"/>
</dbReference>
<dbReference type="SUPFAM" id="SSF46785">
    <property type="entry name" value="Winged helix' DNA-binding domain"/>
    <property type="match status" value="1"/>
</dbReference>
<comment type="function">
    <text evidence="1">The RuvA-RuvB-RuvC complex processes Holliday junction (HJ) DNA during genetic recombination and DNA repair, while the RuvA-RuvB complex plays an important role in the rescue of blocked DNA replication forks via replication fork reversal (RFR). RuvA specifically binds to HJ cruciform DNA, conferring on it an open structure. The RuvB hexamer acts as an ATP-dependent pump, pulling dsDNA into and through the RuvAB complex. RuvB forms 2 homohexamers on either side of HJ DNA bound by 1 or 2 RuvA tetramers; 4 subunits per hexamer contact DNA at a time. Coordinated motions by a converter formed by DNA-disengaged RuvB subunits stimulates ATP hydrolysis and nucleotide exchange. Immobilization of the converter enables RuvB to convert the ATP-contained energy into a lever motion, pulling 2 nucleotides of DNA out of the RuvA tetramer per ATP hydrolyzed, thus driving DNA branch migration. The RuvB motors rotate together with the DNA substrate, which together with the progressing nucleotide cycle form the mechanistic basis for DNA recombination by continuous HJ branch migration. Branch migration allows RuvC to scan DNA until it finds its consensus sequence, where it cleaves and resolves cruciform DNA.</text>
</comment>
<comment type="catalytic activity">
    <reaction evidence="1">
        <text>ATP + H2O = ADP + phosphate + H(+)</text>
        <dbReference type="Rhea" id="RHEA:13065"/>
        <dbReference type="ChEBI" id="CHEBI:15377"/>
        <dbReference type="ChEBI" id="CHEBI:15378"/>
        <dbReference type="ChEBI" id="CHEBI:30616"/>
        <dbReference type="ChEBI" id="CHEBI:43474"/>
        <dbReference type="ChEBI" id="CHEBI:456216"/>
    </reaction>
</comment>
<comment type="subunit">
    <text evidence="1">Homohexamer. Forms an RuvA(8)-RuvB(12)-Holliday junction (HJ) complex. HJ DNA is sandwiched between 2 RuvA tetramers; dsDNA enters through RuvA and exits via RuvB. An RuvB hexamer assembles on each DNA strand where it exits the tetramer. Each RuvB hexamer is contacted by two RuvA subunits (via domain III) on 2 adjacent RuvB subunits; this complex drives branch migration. In the full resolvosome a probable DNA-RuvA(4)-RuvB(12)-RuvC(2) complex forms which resolves the HJ.</text>
</comment>
<comment type="subcellular location">
    <subcellularLocation>
        <location evidence="1">Cytoplasm</location>
    </subcellularLocation>
</comment>
<comment type="domain">
    <text evidence="1">Has 3 domains, the large (RuvB-L) and small ATPase (RuvB-S) domains and the C-terminal head (RuvB-H) domain. The head domain binds DNA, while the ATPase domains jointly bind ATP, ADP or are empty depending on the state of the subunit in the translocation cycle. During a single DNA translocation step the structure of each domain remains the same, but their relative positions change.</text>
</comment>
<comment type="similarity">
    <text evidence="1">Belongs to the RuvB family.</text>
</comment>
<gene>
    <name evidence="1" type="primary">ruvB</name>
    <name type="ordered locus">TP_0162</name>
</gene>
<keyword id="KW-0067">ATP-binding</keyword>
<keyword id="KW-0963">Cytoplasm</keyword>
<keyword id="KW-0227">DNA damage</keyword>
<keyword id="KW-0233">DNA recombination</keyword>
<keyword id="KW-0234">DNA repair</keyword>
<keyword id="KW-0238">DNA-binding</keyword>
<keyword id="KW-0378">Hydrolase</keyword>
<keyword id="KW-0547">Nucleotide-binding</keyword>
<keyword id="KW-1185">Reference proteome</keyword>
<evidence type="ECO:0000255" key="1">
    <source>
        <dbReference type="HAMAP-Rule" id="MF_00016"/>
    </source>
</evidence>
<evidence type="ECO:0000256" key="2">
    <source>
        <dbReference type="SAM" id="MobiDB-lite"/>
    </source>
</evidence>
<evidence type="ECO:0000305" key="3"/>
<organism>
    <name type="scientific">Treponema pallidum (strain Nichols)</name>
    <dbReference type="NCBI Taxonomy" id="243276"/>
    <lineage>
        <taxon>Bacteria</taxon>
        <taxon>Pseudomonadati</taxon>
        <taxon>Spirochaetota</taxon>
        <taxon>Spirochaetia</taxon>
        <taxon>Spirochaetales</taxon>
        <taxon>Treponemataceae</taxon>
        <taxon>Treponema</taxon>
    </lineage>
</organism>
<reference key="1">
    <citation type="journal article" date="1998" name="Science">
        <title>Complete genome sequence of Treponema pallidum, the syphilis spirochete.</title>
        <authorList>
            <person name="Fraser C.M."/>
            <person name="Norris S.J."/>
            <person name="Weinstock G.M."/>
            <person name="White O."/>
            <person name="Sutton G.G."/>
            <person name="Dodson R.J."/>
            <person name="Gwinn M.L."/>
            <person name="Hickey E.K."/>
            <person name="Clayton R.A."/>
            <person name="Ketchum K.A."/>
            <person name="Sodergren E."/>
            <person name="Hardham J.M."/>
            <person name="McLeod M.P."/>
            <person name="Salzberg S.L."/>
            <person name="Peterson J.D."/>
            <person name="Khalak H.G."/>
            <person name="Richardson D.L."/>
            <person name="Howell J.K."/>
            <person name="Chidambaram M."/>
            <person name="Utterback T.R."/>
            <person name="McDonald L.A."/>
            <person name="Artiach P."/>
            <person name="Bowman C."/>
            <person name="Cotton M.D."/>
            <person name="Fujii C."/>
            <person name="Garland S.A."/>
            <person name="Hatch B."/>
            <person name="Horst K."/>
            <person name="Roberts K.M."/>
            <person name="Sandusky M."/>
            <person name="Weidman J.F."/>
            <person name="Smith H.O."/>
            <person name="Venter J.C."/>
        </authorList>
    </citation>
    <scope>NUCLEOTIDE SEQUENCE [LARGE SCALE GENOMIC DNA]</scope>
    <source>
        <strain>Nichols</strain>
    </source>
</reference>
<reference key="2">
    <citation type="journal article" date="1997" name="Gene">
        <title>Identification and transcriptional analysis of a Treponema pallidum operon encoding a putative ABC transport system, an iron-activated repressor protein homolog, and a glycolytic pathway enzyme homolog.</title>
        <authorList>
            <person name="Hardham J.M."/>
            <person name="Stamm L.V."/>
            <person name="Porcella S.F."/>
            <person name="Frye J.G."/>
            <person name="Barnes N.Y."/>
            <person name="Howell J.K."/>
            <person name="Mueller S.L."/>
            <person name="Radolf J.D."/>
            <person name="Weinstock G.M."/>
            <person name="Norris S.J."/>
        </authorList>
    </citation>
    <scope>NUCLEOTIDE SEQUENCE [GENOMIC DNA] OF 1-82</scope>
</reference>
<sequence length="350" mass="38665">MDHTASLSPVRPEAQPTDDRERALRPRLLKDFLGQEKTKRNLRLFIQAARDRNESLDHLFLIGPPGLGKTTLAHITACELGVECKVTGAPALDKPKDLAGILTALSERSVFFVDEIHRLKPAIEEMLYIAMEDYELDWVIGQGPSARTVRIPLPPFTLIGATTRAGMVSSPLISRFGIVERFEFYTPEELAAIVQRSARLLDITLDARAALALARCSRGTPRVANRLLRRIRDFAQVAGSAHISETIVRAGLAHLKIDELGLELHDIQLLRVMIEHFGGGPVGAETLAISLGESPETLEDYYEPYLIQIGLMQRTPRGRMATARAYAHLGLPVPEARTLTPHSPEQGTLL</sequence>
<name>RUVB_TREPA</name>